<accession>P9WI31</accession>
<accession>L0T5J3</accession>
<accession>Q79FT5</accession>
<accession>Q7D8Y7</accession>
<gene>
    <name evidence="9" type="primary">PPE15</name>
    <name evidence="5" type="synonym">mper1</name>
    <name evidence="9" type="ordered locus">Rv1039c</name>
</gene>
<reference key="1">
    <citation type="journal article" date="1998" name="Nature">
        <title>Deciphering the biology of Mycobacterium tuberculosis from the complete genome sequence.</title>
        <authorList>
            <person name="Cole S.T."/>
            <person name="Brosch R."/>
            <person name="Parkhill J."/>
            <person name="Garnier T."/>
            <person name="Churcher C.M."/>
            <person name="Harris D.E."/>
            <person name="Gordon S.V."/>
            <person name="Eiglmeier K."/>
            <person name="Gas S."/>
            <person name="Barry C.E. III"/>
            <person name="Tekaia F."/>
            <person name="Badcock K."/>
            <person name="Basham D."/>
            <person name="Brown D."/>
            <person name="Chillingworth T."/>
            <person name="Connor R."/>
            <person name="Davies R.M."/>
            <person name="Devlin K."/>
            <person name="Feltwell T."/>
            <person name="Gentles S."/>
            <person name="Hamlin N."/>
            <person name="Holroyd S."/>
            <person name="Hornsby T."/>
            <person name="Jagels K."/>
            <person name="Krogh A."/>
            <person name="McLean J."/>
            <person name="Moule S."/>
            <person name="Murphy L.D."/>
            <person name="Oliver S."/>
            <person name="Osborne J."/>
            <person name="Quail M.A."/>
            <person name="Rajandream M.A."/>
            <person name="Rogers J."/>
            <person name="Rutter S."/>
            <person name="Seeger K."/>
            <person name="Skelton S."/>
            <person name="Squares S."/>
            <person name="Squares R."/>
            <person name="Sulston J.E."/>
            <person name="Taylor K."/>
            <person name="Whitehead S."/>
            <person name="Barrell B.G."/>
        </authorList>
    </citation>
    <scope>NUCLEOTIDE SEQUENCE [LARGE SCALE GENOMIC DNA]</scope>
    <source>
        <strain>ATCC 25618 / H37Rv</strain>
    </source>
</reference>
<reference key="2">
    <citation type="journal article" date="2016" name="Mol. Microbiol.">
        <title>The perilipin-like PPE15 protein in Mycobacterium tuberculosis is required for triacylglycerol accumulation under dormancy-inducing conditions.</title>
        <authorList>
            <person name="Daniel J."/>
            <person name="Kapoor N."/>
            <person name="Sirakova T."/>
            <person name="Sinha R."/>
            <person name="Kolattukudy P."/>
        </authorList>
    </citation>
    <scope>FUNCTION</scope>
    <scope>INDUCTION</scope>
    <scope>DISRUPTION PHENOTYPE</scope>
</reference>
<reference key="3">
    <citation type="journal article" date="2024" name="Apoptosis">
        <title>C-terminal region of Rv1039c (PPE15) protein of Mycobacterium tuberculosis targets host mitochondria to induce macrophage apoptosis.</title>
        <authorList>
            <person name="Priyanka X."/>
            <person name="Sharma S."/>
            <person name="Varma-Basil M."/>
            <person name="Sharma M."/>
        </authorList>
    </citation>
    <scope>FUNCTION</scope>
    <scope>INTERACTION WITH HOST TLR4</scope>
    <scope>SUBCELLULAR LOCATION</scope>
    <scope>DOMAIN</scope>
    <scope>MUTAGENESIS OF 312-LEU--ALA-367</scope>
    <source>
        <strain>H37Rv</strain>
    </source>
</reference>
<reference key="4">
    <citation type="journal article" date="2024" name="Biochim. Biophys. Acta">
        <title>Mycobacterium tuberculosis protein PPE15 (Rv1039c) possesses eukaryote-like SH3 domain that interferes with NADPH Oxidase assembly and Reactive Oxygen Species production.</title>
        <authorList>
            <person name="Priyanka X."/>
            <person name="Sharma S."/>
            <person name="Joshi H."/>
            <person name="Kumar C."/>
            <person name="Waseem R."/>
            <person name="Sharma M."/>
        </authorList>
    </citation>
    <scope>FUNCTION</scope>
    <scope>INTERACTION WITH HOST NOX SUBUNITS</scope>
    <scope>SUBCELLULAR LOCATION</scope>
    <scope>DOMAIN</scope>
    <scope>MUTAGENESIS OF 312-LEU--ALA-367</scope>
    <source>
        <strain>H37Rv</strain>
    </source>
</reference>
<reference evidence="10" key="5">
    <citation type="journal article" date="2017" name="J. Biol. Chem.">
        <title>Structural basis of the PE-PPE protein interaction in Mycobacterium tuberculosis.</title>
        <authorList>
            <person name="Chen X."/>
            <person name="Cheng H.F."/>
            <person name="Zhou J."/>
            <person name="Chan C.Y."/>
            <person name="Lau K.F."/>
            <person name="Tsui S.K."/>
            <person name="Au S.W."/>
        </authorList>
    </citation>
    <scope>X-RAY CRYSTALLOGRAPHY (2.90 ANGSTROMS) OF 1-194 IN COMPLEX WITH PE8 AND ESPG5</scope>
    <scope>MUTAGENESIS OF ARG-14; TYR-45; TYR-72; SER-93 AND TYR-154</scope>
    <source>
        <strain>H37Rv</strain>
    </source>
</reference>
<sequence>MDFGALPPEINSARMYAGAGAGPMMAAGAAWNGLAAELGTTAASYESVITRLTTESWMGPASMAMVAAAQPYLAWLTYTAEAAAHAGSQAMASAAAYEAAYAMTVPPEVVAANRALLAALVATNVLGINTPAIMATEALYAEMWAQDALAMYGYAAASGAAGMLQPLSPPSQTTNPGGLAAQSAAVGSAAATAAVNQVSVADLISSLPNAVSGLASPVTSVLDSTGLSGIIADIDALLATPFVANIINSAVNTAAWYVNAAIPTAIFLANALNSGAPVAIAEGAIEAAEGAASAAAAGLADSVTPAGLGASLGEATLVGRLSVPAAWSTAAPATTAGATALEGSGWTVAAEEAGPVTGMMPGMASAAKGTGAYAGPRYGFKPTVMPKQVVV</sequence>
<dbReference type="EMBL" id="AL123456">
    <property type="protein sequence ID" value="CCP43790.1"/>
    <property type="molecule type" value="Genomic_DNA"/>
</dbReference>
<dbReference type="PIR" id="B70625">
    <property type="entry name" value="B70625"/>
</dbReference>
<dbReference type="RefSeq" id="WP_003405368.1">
    <property type="nucleotide sequence ID" value="NZ_NVQJ01000098.1"/>
</dbReference>
<dbReference type="RefSeq" id="YP_177778.1">
    <property type="nucleotide sequence ID" value="NC_000962.3"/>
</dbReference>
<dbReference type="PDB" id="5XFS">
    <property type="method" value="X-ray"/>
    <property type="resolution" value="2.90 A"/>
    <property type="chains" value="B=1-194"/>
</dbReference>
<dbReference type="PDBsum" id="5XFS"/>
<dbReference type="SMR" id="P9WI31"/>
<dbReference type="STRING" id="83332.Rv1039c"/>
<dbReference type="PaxDb" id="83332-Rv1039c"/>
<dbReference type="DNASU" id="888477"/>
<dbReference type="GeneID" id="888477"/>
<dbReference type="KEGG" id="mtu:Rv1039c"/>
<dbReference type="KEGG" id="mtv:RVBD_1039c"/>
<dbReference type="TubercuList" id="Rv1039c"/>
<dbReference type="eggNOG" id="COG5651">
    <property type="taxonomic scope" value="Bacteria"/>
</dbReference>
<dbReference type="InParanoid" id="P9WI31"/>
<dbReference type="OrthoDB" id="4752888at2"/>
<dbReference type="PhylomeDB" id="P9WI31"/>
<dbReference type="Proteomes" id="UP000001584">
    <property type="component" value="Chromosome"/>
</dbReference>
<dbReference type="GO" id="GO:0005576">
    <property type="term" value="C:extracellular region"/>
    <property type="evidence" value="ECO:0007669"/>
    <property type="project" value="UniProtKB-SubCell"/>
</dbReference>
<dbReference type="GO" id="GO:0033650">
    <property type="term" value="C:host cell mitochondrion"/>
    <property type="evidence" value="ECO:0007669"/>
    <property type="project" value="UniProtKB-SubCell"/>
</dbReference>
<dbReference type="GO" id="GO:0052572">
    <property type="term" value="P:response to host immune response"/>
    <property type="evidence" value="ECO:0000318"/>
    <property type="project" value="GO_Central"/>
</dbReference>
<dbReference type="FunFam" id="1.20.1260.20:FF:000001">
    <property type="entry name" value="PPE family protein PPE41"/>
    <property type="match status" value="1"/>
</dbReference>
<dbReference type="Gene3D" id="1.20.1260.20">
    <property type="entry name" value="PPE superfamily"/>
    <property type="match status" value="1"/>
</dbReference>
<dbReference type="InterPro" id="IPR022171">
    <property type="entry name" value="PPE_C"/>
</dbReference>
<dbReference type="InterPro" id="IPR000030">
    <property type="entry name" value="PPE_dom"/>
</dbReference>
<dbReference type="InterPro" id="IPR038332">
    <property type="entry name" value="PPE_sf"/>
</dbReference>
<dbReference type="PANTHER" id="PTHR46766">
    <property type="entry name" value="GLUTAMINE-RICH PROTEIN 2"/>
    <property type="match status" value="1"/>
</dbReference>
<dbReference type="PANTHER" id="PTHR46766:SF1">
    <property type="entry name" value="GLUTAMINE-RICH PROTEIN 2"/>
    <property type="match status" value="1"/>
</dbReference>
<dbReference type="Pfam" id="PF00823">
    <property type="entry name" value="PPE"/>
    <property type="match status" value="1"/>
</dbReference>
<dbReference type="Pfam" id="PF12484">
    <property type="entry name" value="PPE-SVP"/>
    <property type="match status" value="1"/>
</dbReference>
<dbReference type="SUPFAM" id="SSF140459">
    <property type="entry name" value="PE/PPE dimer-like"/>
    <property type="match status" value="1"/>
</dbReference>
<organism>
    <name type="scientific">Mycobacterium tuberculosis (strain ATCC 25618 / H37Rv)</name>
    <dbReference type="NCBI Taxonomy" id="83332"/>
    <lineage>
        <taxon>Bacteria</taxon>
        <taxon>Bacillati</taxon>
        <taxon>Actinomycetota</taxon>
        <taxon>Actinomycetes</taxon>
        <taxon>Mycobacteriales</taxon>
        <taxon>Mycobacteriaceae</taxon>
        <taxon>Mycobacterium</taxon>
        <taxon>Mycobacterium tuberculosis complex</taxon>
    </lineage>
</organism>
<feature type="chain" id="PRO_0000378477" description="PPE family protein PPE15">
    <location>
        <begin position="1"/>
        <end position="391"/>
    </location>
</feature>
<feature type="region of interest" description="Eukaryotic-like SH3 domain" evidence="8">
    <location>
        <begin position="312"/>
        <end position="367"/>
    </location>
</feature>
<feature type="mutagenesis site" description="Reduces the interaction with PE8. Lack of interaction with PE8; when associated with A-45; A-72; A-93 and A-154." evidence="2">
    <original>R</original>
    <variation>A</variation>
    <location>
        <position position="14"/>
    </location>
</feature>
<feature type="mutagenesis site" description="Reduces the interaction with PE8. Lack of interaction with PE8; when associated with A-14; A-72; A-93 and A-154." evidence="2">
    <original>Y</original>
    <variation>A</variation>
    <location>
        <position position="45"/>
    </location>
</feature>
<feature type="mutagenesis site" description="Reduces the interaction with PE8. Lack of interaction with PE8; when associated with A-14; A-45; A-93 and A-154." evidence="2">
    <original>Y</original>
    <variation>A</variation>
    <location>
        <position position="72"/>
    </location>
</feature>
<feature type="mutagenesis site" description="Reduces the interaction with PE8. Lack of interaction with PE8; when associated with A-14; A-45; A-72 and A-154." evidence="2">
    <original>S</original>
    <variation>A</variation>
    <location>
        <position position="93"/>
    </location>
</feature>
<feature type="mutagenesis site" description="Reduces the interaction with PE8. Lack of interaction with PE8; when associated with A-14; A-45; A-72 and A-93." evidence="2">
    <original>Y</original>
    <variation>A</variation>
    <location>
        <position position="154"/>
    </location>
</feature>
<feature type="mutagenesis site" description="Reduces mitochondrial localization in THP1 macrophages. Increases NOX activity and levels of cellular ROS. The interaction with NOX subunits is reduced in the host cytoplasm." evidence="3 4">
    <location>
        <begin position="312"/>
        <end position="367"/>
    </location>
</feature>
<feature type="helix" evidence="11">
    <location>
        <begin position="8"/>
        <end position="13"/>
    </location>
</feature>
<feature type="strand" evidence="11">
    <location>
        <begin position="16"/>
        <end position="18"/>
    </location>
</feature>
<feature type="helix" evidence="11">
    <location>
        <begin position="22"/>
        <end position="55"/>
    </location>
</feature>
<feature type="turn" evidence="11">
    <location>
        <begin position="56"/>
        <end position="58"/>
    </location>
</feature>
<feature type="helix" evidence="11">
    <location>
        <begin position="59"/>
        <end position="61"/>
    </location>
</feature>
<feature type="helix" evidence="11">
    <location>
        <begin position="62"/>
        <end position="103"/>
    </location>
</feature>
<feature type="helix" evidence="11">
    <location>
        <begin position="107"/>
        <end position="122"/>
    </location>
</feature>
<feature type="strand" evidence="11">
    <location>
        <begin position="125"/>
        <end position="127"/>
    </location>
</feature>
<feature type="helix" evidence="11">
    <location>
        <begin position="130"/>
        <end position="161"/>
    </location>
</feature>
<keyword id="KW-0002">3D-structure</keyword>
<keyword id="KW-1045">Host mitochondrion</keyword>
<keyword id="KW-1185">Reference proteome</keyword>
<keyword id="KW-0964">Secreted</keyword>
<keyword id="KW-0843">Virulence</keyword>
<proteinExistence type="evidence at protein level"/>
<protein>
    <recommendedName>
        <fullName evidence="6">PPE family protein PPE15</fullName>
    </recommendedName>
    <alternativeName>
        <fullName evidence="5">Mycobacterial perilipin-1</fullName>
        <shortName evidence="5">MPER1</shortName>
    </alternativeName>
</protein>
<name>PPE15_MYCTU</name>
<evidence type="ECO:0000269" key="1">
    <source>
    </source>
</evidence>
<evidence type="ECO:0000269" key="2">
    <source>
    </source>
</evidence>
<evidence type="ECO:0000269" key="3">
    <source>
    </source>
</evidence>
<evidence type="ECO:0000269" key="4">
    <source>
    </source>
</evidence>
<evidence type="ECO:0000303" key="5">
    <source>
    </source>
</evidence>
<evidence type="ECO:0000305" key="6"/>
<evidence type="ECO:0000305" key="7">
    <source>
    </source>
</evidence>
<evidence type="ECO:0000305" key="8">
    <source>
    </source>
</evidence>
<evidence type="ECO:0000312" key="9">
    <source>
        <dbReference type="EMBL" id="CCP43790.1"/>
    </source>
</evidence>
<evidence type="ECO:0007744" key="10">
    <source>
        <dbReference type="PDB" id="5XFS"/>
    </source>
</evidence>
<evidence type="ECO:0007829" key="11">
    <source>
        <dbReference type="PDB" id="5XFS"/>
    </source>
</evidence>
<comment type="function">
    <text evidence="1 3 4">May play a critical role in the homeostasis of triacylglycerol-containing lipid droplets in M.tuberculosis and influence the entry of the pathogen into a dormant state (PubMed:27325376). Is recognized by host TLR4 receptor at the macrophage cell surface, which modulates the host immune response, induces mitochondrial stress and perturbations, and induces macrophage apoptosis leading to pathogen persistence (PubMed:38615303). Also downregulates NOX-mediated reactive oxygen species (ROS) generation in THP1 macrophages, which increases intracellular survival of bacteria (PubMed:38408543). PPE15 interacts with two subunits of the host NADPH oxidase (NOX) complex in the cytosol of macrophages and prevents their migration to the membrane, which inhibits the assembly of the NOX complex at the plasma membrane of THP1 macrophages (PubMed:38408543). This leads to reduced NOX activity and diminished ROS generation (PubMed:38408543).</text>
</comment>
<comment type="subunit">
    <text evidence="2 3 4">Forms a heterodimer with PE8 (PubMed:28842489). The dimer forms a 1:1:1 heterotrimeric complex with EspG5 (PubMed:28842489). PPE15 interacts directly with EspG5 (PubMed:28842489). Interacts via the C-terminal region with host Toll-like receptor 4 (TLR4) (PubMed:38615303). Interacts, also via the C-terminal region, with two cytosolic subunits of the host NOX complex, p47phox (NCF1) and p67phox (NCF2) (PubMed:38408543).</text>
</comment>
<comment type="subcellular location">
    <subcellularLocation>
        <location evidence="3">Secreted</location>
    </subcellularLocation>
    <subcellularLocation>
        <location evidence="4">Host mitochondrion</location>
    </subcellularLocation>
</comment>
<comment type="induction">
    <text evidence="7">Up-regulated in tuberculosis dormancy.</text>
</comment>
<comment type="domain">
    <text evidence="4">Contains nine predicted mitochondria targeting signal sequences (MTS), majorly spanning the C-terminal region of the protein.</text>
</comment>
<comment type="domain">
    <text evidence="3 4">The C-terminal region (amino acids 312-367) is disordered, hydrophobic, contains a eukaryotic-like SH3 (SH3e) domain and shows similarity with the C-terminal region of mitochondria-targeting eukaryotic pro-apoptotic Bcl2-family and BH3-only proteins (PubMed:38408543, PubMed:38615303). This C-terminal region is required for secretion (PubMed:38408543). This region interacts with host TLR4 and NOX components (PubMed:38408543, PubMed:38615303).</text>
</comment>
<comment type="disruption phenotype">
    <text evidence="1">Disruption mutant shows a significant decrease in the biosynthesis and accumulation of lipid droplets containing triacylglycerol and in its tolerance to rifampicin.</text>
</comment>
<comment type="similarity">
    <text evidence="6">Belongs to the mycobacterial PPE family.</text>
</comment>